<reference key="1">
    <citation type="journal article" date="2015" name="Genome Announc.">
        <title>Genome sequence of Aspergillus flavus NRRL 3357, a strain that causes aflatoxin contamination of food and feed.</title>
        <authorList>
            <person name="Nierman W.C."/>
            <person name="Yu J."/>
            <person name="Fedorova-Abrams N.D."/>
            <person name="Losada L."/>
            <person name="Cleveland T.E."/>
            <person name="Bhatnagar D."/>
            <person name="Bennett J.W."/>
            <person name="Dean R."/>
            <person name="Payne G.A."/>
        </authorList>
    </citation>
    <scope>NUCLEOTIDE SEQUENCE [LARGE SCALE GENOMIC DNA]</scope>
    <source>
        <strain>ATCC 200026 / FGSC A1120 / IAM 13836 / NRRL 3357 / JCM 12722 / SRRC 167</strain>
    </source>
</reference>
<comment type="function">
    <text evidence="1">Endo-1,4-mannanase, a crucial enzyme for depolymerization of seed galactomannans and wood galactoglucomannans.</text>
</comment>
<comment type="catalytic activity">
    <reaction>
        <text>Random hydrolysis of (1-&gt;4)-beta-D-mannosidic linkages in mannans, galactomannans and glucomannans.</text>
        <dbReference type="EC" id="3.2.1.78"/>
    </reaction>
</comment>
<comment type="subcellular location">
    <subcellularLocation>
        <location evidence="1">Secreted</location>
    </subcellularLocation>
</comment>
<comment type="similarity">
    <text evidence="5">Belongs to the glycosyl hydrolase 5 (cellulase A) family.</text>
</comment>
<comment type="sequence caution" evidence="5">
    <conflict type="erroneous initiation">
        <sequence resource="EMBL-CDS" id="EED45466"/>
    </conflict>
    <text>Extended N-terminus.</text>
</comment>
<protein>
    <recommendedName>
        <fullName>Probable mannan endo-1,4-beta-mannosidase A</fullName>
        <ecNumber>3.2.1.78</ecNumber>
    </recommendedName>
    <alternativeName>
        <fullName>Endo-beta-1,4-mannanase A</fullName>
    </alternativeName>
</protein>
<sequence length="386" mass="42008">MKLNPSLLTAAGLVSAQLASALPQASSSTVSPSPSPSATPGSFVTTSGLNFVIDGKTGYFAGSNSYWIGFQKNNDDVDLVFSHLQESGLKILRVWGFNDVNQKPTDGSVYYHLLADGTATVNEGEDGLQRLDYVVSSAEKHGIKLIINFVNFWDDYGGINAYVKAFGGSKEDFYTNDAMQAAYRAYIKAVISRYSDSTAIFAWELANEPRCQGCETTVLYNWIESTSQYIKSLDSKHLVCIGDEGFGLDTGSDGSYPYQYSEGSDFAKNLAIPTIDFGTFHLYPSSWGTTNDWGNGWVTSHGAACKEAGKPCLFEEYGVTSDHCAVEKPWQNTALNTTAISGDLYWQYGDQLSGGPSPDDGNTFYYGTDDFKCLVTDHIAAINSRN</sequence>
<evidence type="ECO:0000250" key="1"/>
<evidence type="ECO:0000250" key="2">
    <source>
        <dbReference type="UniProtKB" id="B4XC07"/>
    </source>
</evidence>
<evidence type="ECO:0000250" key="3">
    <source>
        <dbReference type="UniProtKB" id="Q99036"/>
    </source>
</evidence>
<evidence type="ECO:0000255" key="4"/>
<evidence type="ECO:0000305" key="5"/>
<feature type="signal peptide" evidence="4">
    <location>
        <begin position="1"/>
        <end position="21"/>
    </location>
</feature>
<feature type="chain" id="PRO_0000393702" description="Probable mannan endo-1,4-beta-mannosidase A">
    <location>
        <begin position="22"/>
        <end position="386"/>
    </location>
</feature>
<feature type="active site" description="Proton donor" evidence="3">
    <location>
        <position position="208"/>
    </location>
</feature>
<feature type="active site" description="Nucleophile" evidence="3">
    <location>
        <position position="316"/>
    </location>
</feature>
<feature type="binding site" evidence="2">
    <location>
        <position position="95"/>
    </location>
    <ligand>
        <name>substrate</name>
    </ligand>
</feature>
<feature type="binding site" evidence="2">
    <location>
        <position position="207"/>
    </location>
    <ligand>
        <name>substrate</name>
    </ligand>
</feature>
<feature type="binding site" evidence="2">
    <location>
        <position position="283"/>
    </location>
    <ligand>
        <name>substrate</name>
    </ligand>
</feature>
<feature type="binding site" evidence="2">
    <location>
        <position position="346"/>
    </location>
    <ligand>
        <name>substrate</name>
    </ligand>
</feature>
<feature type="glycosylation site" description="N-linked (GlcNAc...) asparagine" evidence="4">
    <location>
        <position position="336"/>
    </location>
</feature>
<name>MANA_ASPFN</name>
<accession>B8NVK8</accession>
<proteinExistence type="inferred from homology"/>
<dbReference type="EC" id="3.2.1.78"/>
<dbReference type="EMBL" id="EQ963485">
    <property type="protein sequence ID" value="EED45466.1"/>
    <property type="status" value="ALT_INIT"/>
    <property type="molecule type" value="Genomic_DNA"/>
</dbReference>
<dbReference type="RefSeq" id="XP_002384402.1">
    <property type="nucleotide sequence ID" value="XM_002384361.1"/>
</dbReference>
<dbReference type="SMR" id="B8NVK8"/>
<dbReference type="STRING" id="332952.B8NVK8"/>
<dbReference type="GlyCosmos" id="B8NVK8">
    <property type="glycosylation" value="1 site, No reported glycans"/>
</dbReference>
<dbReference type="EnsemblFungi" id="EED45466">
    <property type="protein sequence ID" value="EED45466"/>
    <property type="gene ID" value="AFLA_116950"/>
</dbReference>
<dbReference type="VEuPathDB" id="FungiDB:AFLA_013662"/>
<dbReference type="eggNOG" id="ENOG502QS4Q">
    <property type="taxonomic scope" value="Eukaryota"/>
</dbReference>
<dbReference type="GO" id="GO:0005576">
    <property type="term" value="C:extracellular region"/>
    <property type="evidence" value="ECO:0007669"/>
    <property type="project" value="UniProtKB-SubCell"/>
</dbReference>
<dbReference type="GO" id="GO:0016985">
    <property type="term" value="F:mannan endo-1,4-beta-mannosidase activity"/>
    <property type="evidence" value="ECO:0007669"/>
    <property type="project" value="UniProtKB-EC"/>
</dbReference>
<dbReference type="GO" id="GO:0046355">
    <property type="term" value="P:mannan catabolic process"/>
    <property type="evidence" value="ECO:0007669"/>
    <property type="project" value="UniProtKB-ARBA"/>
</dbReference>
<dbReference type="FunFam" id="3.20.20.80:FF:000076">
    <property type="entry name" value="Mannan endo-1,4-beta-mannosidase A"/>
    <property type="match status" value="1"/>
</dbReference>
<dbReference type="Gene3D" id="3.20.20.80">
    <property type="entry name" value="Glycosidases"/>
    <property type="match status" value="1"/>
</dbReference>
<dbReference type="InterPro" id="IPR001547">
    <property type="entry name" value="Glyco_hydro_5"/>
</dbReference>
<dbReference type="InterPro" id="IPR017853">
    <property type="entry name" value="Glycoside_hydrolase_SF"/>
</dbReference>
<dbReference type="InterPro" id="IPR045053">
    <property type="entry name" value="MAN-like"/>
</dbReference>
<dbReference type="PANTHER" id="PTHR31451">
    <property type="match status" value="1"/>
</dbReference>
<dbReference type="PANTHER" id="PTHR31451:SF39">
    <property type="entry name" value="MANNAN ENDO-1,4-BETA-MANNOSIDASE 1"/>
    <property type="match status" value="1"/>
</dbReference>
<dbReference type="Pfam" id="PF00150">
    <property type="entry name" value="Cellulase"/>
    <property type="match status" value="1"/>
</dbReference>
<dbReference type="SUPFAM" id="SSF51445">
    <property type="entry name" value="(Trans)glycosidases"/>
    <property type="match status" value="1"/>
</dbReference>
<gene>
    <name type="primary">manA</name>
    <name type="synonym">man1</name>
    <name type="ORF">AFLA_116950</name>
</gene>
<organism>
    <name type="scientific">Aspergillus flavus (strain ATCC 200026 / FGSC A1120 / IAM 13836 / NRRL 3357 / JCM 12722 / SRRC 167)</name>
    <dbReference type="NCBI Taxonomy" id="332952"/>
    <lineage>
        <taxon>Eukaryota</taxon>
        <taxon>Fungi</taxon>
        <taxon>Dikarya</taxon>
        <taxon>Ascomycota</taxon>
        <taxon>Pezizomycotina</taxon>
        <taxon>Eurotiomycetes</taxon>
        <taxon>Eurotiomycetidae</taxon>
        <taxon>Eurotiales</taxon>
        <taxon>Aspergillaceae</taxon>
        <taxon>Aspergillus</taxon>
        <taxon>Aspergillus subgen. Circumdati</taxon>
    </lineage>
</organism>
<keyword id="KW-0119">Carbohydrate metabolism</keyword>
<keyword id="KW-0325">Glycoprotein</keyword>
<keyword id="KW-0326">Glycosidase</keyword>
<keyword id="KW-0378">Hydrolase</keyword>
<keyword id="KW-0964">Secreted</keyword>
<keyword id="KW-0732">Signal</keyword>